<dbReference type="EC" id="2.8.4.5"/>
<dbReference type="EMBL" id="AE000520">
    <property type="protein sequence ID" value="AAC65257.1"/>
    <property type="molecule type" value="Genomic_DNA"/>
</dbReference>
<dbReference type="PIR" id="G71345">
    <property type="entry name" value="G71345"/>
</dbReference>
<dbReference type="RefSeq" id="WP_010881718.1">
    <property type="nucleotide sequence ID" value="NC_021490.2"/>
</dbReference>
<dbReference type="SMR" id="O83293"/>
<dbReference type="IntAct" id="O83293">
    <property type="interactions" value="3"/>
</dbReference>
<dbReference type="STRING" id="243276.TP_0269"/>
<dbReference type="EnsemblBacteria" id="AAC65257">
    <property type="protein sequence ID" value="AAC65257"/>
    <property type="gene ID" value="TP_0269"/>
</dbReference>
<dbReference type="GeneID" id="93876063"/>
<dbReference type="KEGG" id="tpa:TP_0269"/>
<dbReference type="KEGG" id="tpw:TPANIC_0269"/>
<dbReference type="eggNOG" id="COG0621">
    <property type="taxonomic scope" value="Bacteria"/>
</dbReference>
<dbReference type="HOGENOM" id="CLU_018697_1_0_12"/>
<dbReference type="OrthoDB" id="9805215at2"/>
<dbReference type="Proteomes" id="UP000000811">
    <property type="component" value="Chromosome"/>
</dbReference>
<dbReference type="GO" id="GO:0005737">
    <property type="term" value="C:cytoplasm"/>
    <property type="evidence" value="ECO:0007669"/>
    <property type="project" value="UniProtKB-SubCell"/>
</dbReference>
<dbReference type="GO" id="GO:0051539">
    <property type="term" value="F:4 iron, 4 sulfur cluster binding"/>
    <property type="evidence" value="ECO:0007669"/>
    <property type="project" value="UniProtKB-KW"/>
</dbReference>
<dbReference type="GO" id="GO:0046872">
    <property type="term" value="F:metal ion binding"/>
    <property type="evidence" value="ECO:0007669"/>
    <property type="project" value="UniProtKB-KW"/>
</dbReference>
<dbReference type="GO" id="GO:0035598">
    <property type="term" value="F:N6-threonylcarbomyladenosine methylthiotransferase activity"/>
    <property type="evidence" value="ECO:0007669"/>
    <property type="project" value="TreeGrafter"/>
</dbReference>
<dbReference type="GO" id="GO:0061712">
    <property type="term" value="F:tRNA (N(6)-L-threonylcarbamoyladenosine(37)-C(2))-methylthiotransferase"/>
    <property type="evidence" value="ECO:0007669"/>
    <property type="project" value="UniProtKB-EC"/>
</dbReference>
<dbReference type="CDD" id="cd01335">
    <property type="entry name" value="Radical_SAM"/>
    <property type="match status" value="1"/>
</dbReference>
<dbReference type="Gene3D" id="3.40.50.12160">
    <property type="entry name" value="Methylthiotransferase, N-terminal domain"/>
    <property type="match status" value="1"/>
</dbReference>
<dbReference type="Gene3D" id="3.80.30.20">
    <property type="entry name" value="tm_1862 like domain"/>
    <property type="match status" value="1"/>
</dbReference>
<dbReference type="InterPro" id="IPR006638">
    <property type="entry name" value="Elp3/MiaA/NifB-like_rSAM"/>
</dbReference>
<dbReference type="InterPro" id="IPR005839">
    <property type="entry name" value="Methylthiotransferase"/>
</dbReference>
<dbReference type="InterPro" id="IPR020612">
    <property type="entry name" value="Methylthiotransferase_CS"/>
</dbReference>
<dbReference type="InterPro" id="IPR013848">
    <property type="entry name" value="Methylthiotransferase_N"/>
</dbReference>
<dbReference type="InterPro" id="IPR038135">
    <property type="entry name" value="Methylthiotransferase_N_sf"/>
</dbReference>
<dbReference type="InterPro" id="IPR006467">
    <property type="entry name" value="MiaB-like_bact"/>
</dbReference>
<dbReference type="InterPro" id="IPR007197">
    <property type="entry name" value="rSAM"/>
</dbReference>
<dbReference type="InterPro" id="IPR023404">
    <property type="entry name" value="rSAM_horseshoe"/>
</dbReference>
<dbReference type="NCBIfam" id="TIGR01579">
    <property type="entry name" value="MiaB-like-C"/>
    <property type="match status" value="1"/>
</dbReference>
<dbReference type="PANTHER" id="PTHR11918">
    <property type="entry name" value="RADICAL SAM PROTEINS"/>
    <property type="match status" value="1"/>
</dbReference>
<dbReference type="PANTHER" id="PTHR11918:SF45">
    <property type="entry name" value="THREONYLCARBAMOYLADENOSINE TRNA METHYLTHIOTRANSFERASE"/>
    <property type="match status" value="1"/>
</dbReference>
<dbReference type="Pfam" id="PF04055">
    <property type="entry name" value="Radical_SAM"/>
    <property type="match status" value="1"/>
</dbReference>
<dbReference type="Pfam" id="PF00919">
    <property type="entry name" value="UPF0004"/>
    <property type="match status" value="1"/>
</dbReference>
<dbReference type="SFLD" id="SFLDG01082">
    <property type="entry name" value="B12-binding_domain_containing"/>
    <property type="match status" value="1"/>
</dbReference>
<dbReference type="SFLD" id="SFLDG01061">
    <property type="entry name" value="methylthiotransferase"/>
    <property type="match status" value="1"/>
</dbReference>
<dbReference type="SFLD" id="SFLDS00029">
    <property type="entry name" value="Radical_SAM"/>
    <property type="match status" value="1"/>
</dbReference>
<dbReference type="SMART" id="SM00729">
    <property type="entry name" value="Elp3"/>
    <property type="match status" value="1"/>
</dbReference>
<dbReference type="SUPFAM" id="SSF102114">
    <property type="entry name" value="Radical SAM enzymes"/>
    <property type="match status" value="1"/>
</dbReference>
<dbReference type="PROSITE" id="PS51449">
    <property type="entry name" value="MTTASE_N"/>
    <property type="match status" value="1"/>
</dbReference>
<dbReference type="PROSITE" id="PS01278">
    <property type="entry name" value="MTTASE_RADICAL"/>
    <property type="match status" value="1"/>
</dbReference>
<dbReference type="PROSITE" id="PS51918">
    <property type="entry name" value="RADICAL_SAM"/>
    <property type="match status" value="1"/>
</dbReference>
<comment type="function">
    <text evidence="1">Catalyzes the methylthiolation of N6-threonylcarbamoyladenosine (t(6)A), leading to the formation of 2-methylthio-N6-threonylcarbamoyladenosine (ms(2)t(6)A) at position 37 in tRNAs that read codons beginning with adenine.</text>
</comment>
<comment type="catalytic activity">
    <reaction evidence="1">
        <text>N(6)-L-threonylcarbamoyladenosine(37) in tRNA + (sulfur carrier)-SH + AH2 + 2 S-adenosyl-L-methionine = 2-methylsulfanyl-N(6)-L-threonylcarbamoyladenosine(37) in tRNA + (sulfur carrier)-H + 5'-deoxyadenosine + L-methionine + A + S-adenosyl-L-homocysteine + 2 H(+)</text>
        <dbReference type="Rhea" id="RHEA:37075"/>
        <dbReference type="Rhea" id="RHEA-COMP:10163"/>
        <dbReference type="Rhea" id="RHEA-COMP:11092"/>
        <dbReference type="Rhea" id="RHEA-COMP:14737"/>
        <dbReference type="Rhea" id="RHEA-COMP:14739"/>
        <dbReference type="ChEBI" id="CHEBI:13193"/>
        <dbReference type="ChEBI" id="CHEBI:15378"/>
        <dbReference type="ChEBI" id="CHEBI:17319"/>
        <dbReference type="ChEBI" id="CHEBI:17499"/>
        <dbReference type="ChEBI" id="CHEBI:29917"/>
        <dbReference type="ChEBI" id="CHEBI:57844"/>
        <dbReference type="ChEBI" id="CHEBI:57856"/>
        <dbReference type="ChEBI" id="CHEBI:59789"/>
        <dbReference type="ChEBI" id="CHEBI:64428"/>
        <dbReference type="ChEBI" id="CHEBI:74418"/>
        <dbReference type="ChEBI" id="CHEBI:74420"/>
        <dbReference type="EC" id="2.8.4.5"/>
    </reaction>
</comment>
<comment type="cofactor">
    <cofactor evidence="2">
        <name>[4Fe-4S] cluster</name>
        <dbReference type="ChEBI" id="CHEBI:49883"/>
    </cofactor>
    <text evidence="2">Binds 2 [4Fe-4S] clusters. One cluster is coordinated with 3 cysteines and an exchangeable S-adenosyl-L-methionine.</text>
</comment>
<comment type="subcellular location">
    <subcellularLocation>
        <location evidence="2">Cytoplasm</location>
    </subcellularLocation>
</comment>
<comment type="similarity">
    <text evidence="4">Belongs to the methylthiotransferase family. MtaB subfamily.</text>
</comment>
<feature type="chain" id="PRO_0000141755" description="Threonylcarbamoyladenosine tRNA methylthiotransferase MtaB">
    <location>
        <begin position="1"/>
        <end position="482"/>
    </location>
</feature>
<feature type="domain" description="MTTase N-terminal" evidence="2">
    <location>
        <begin position="2"/>
        <end position="120"/>
    </location>
</feature>
<feature type="domain" description="Radical SAM core" evidence="3">
    <location>
        <begin position="199"/>
        <end position="425"/>
    </location>
</feature>
<feature type="binding site" evidence="2">
    <location>
        <position position="11"/>
    </location>
    <ligand>
        <name>[4Fe-4S] cluster</name>
        <dbReference type="ChEBI" id="CHEBI:49883"/>
        <label>1</label>
    </ligand>
</feature>
<feature type="binding site" evidence="2">
    <location>
        <position position="50"/>
    </location>
    <ligand>
        <name>[4Fe-4S] cluster</name>
        <dbReference type="ChEBI" id="CHEBI:49883"/>
        <label>1</label>
    </ligand>
</feature>
<feature type="binding site" evidence="2">
    <location>
        <position position="81"/>
    </location>
    <ligand>
        <name>[4Fe-4S] cluster</name>
        <dbReference type="ChEBI" id="CHEBI:49883"/>
        <label>1</label>
    </ligand>
</feature>
<feature type="binding site" evidence="2">
    <location>
        <position position="213"/>
    </location>
    <ligand>
        <name>[4Fe-4S] cluster</name>
        <dbReference type="ChEBI" id="CHEBI:49883"/>
        <label>2</label>
        <note>4Fe-4S-S-AdoMet</note>
    </ligand>
</feature>
<feature type="binding site" evidence="2">
    <location>
        <position position="217"/>
    </location>
    <ligand>
        <name>[4Fe-4S] cluster</name>
        <dbReference type="ChEBI" id="CHEBI:49883"/>
        <label>2</label>
        <note>4Fe-4S-S-AdoMet</note>
    </ligand>
</feature>
<feature type="binding site" evidence="2">
    <location>
        <position position="220"/>
    </location>
    <ligand>
        <name>[4Fe-4S] cluster</name>
        <dbReference type="ChEBI" id="CHEBI:49883"/>
        <label>2</label>
        <note>4Fe-4S-S-AdoMet</note>
    </ligand>
</feature>
<sequence>MFSVRIETLGCRLNHVESESLAALFLQEGFAVCRGNTSTAPVVLCVINTCTVTSKAEQKARRLVRLLLRTYPTAIALVTGCYAQLEPASLEAMDDRVLAFPGKQKDALSLLPSCLRALLVQRGPAPIDQYVCGMRALLASLKKKIISLELTSEFPSQTHMPTRNALPQLTGVPHAPRVSVSSFSEPTAVPRFALYAPRFLFHSRASIKVQDGCNSGCAFCRIRFARGRAVSLETHEVIGRVQALEARGMSEVVLTGVNLSQYRSGSIDFAGLLELIVQETHTIHIRISSLYPESVTSAFLRAIAHTRVSPHFHLSVQSGSDRVLRRMRRAYTRADIYQAVSDLRSVREEPFLGCDIIVGFPGETEEDFADTQRMCKTLRFAGIHVFPFSARPGTEAFAMDAKVPQRIAGERVAAMQQLAEKNYRAYLEYWNGRELCAVVEQSVARVLTENYLSLPIIERGGVAASAGSHVRIRVHNEGAILL</sequence>
<keyword id="KW-0004">4Fe-4S</keyword>
<keyword id="KW-0963">Cytoplasm</keyword>
<keyword id="KW-0408">Iron</keyword>
<keyword id="KW-0411">Iron-sulfur</keyword>
<keyword id="KW-0479">Metal-binding</keyword>
<keyword id="KW-1185">Reference proteome</keyword>
<keyword id="KW-0949">S-adenosyl-L-methionine</keyword>
<keyword id="KW-0808">Transferase</keyword>
<keyword id="KW-0819">tRNA processing</keyword>
<reference key="1">
    <citation type="journal article" date="1998" name="Science">
        <title>Complete genome sequence of Treponema pallidum, the syphilis spirochete.</title>
        <authorList>
            <person name="Fraser C.M."/>
            <person name="Norris S.J."/>
            <person name="Weinstock G.M."/>
            <person name="White O."/>
            <person name="Sutton G.G."/>
            <person name="Dodson R.J."/>
            <person name="Gwinn M.L."/>
            <person name="Hickey E.K."/>
            <person name="Clayton R.A."/>
            <person name="Ketchum K.A."/>
            <person name="Sodergren E."/>
            <person name="Hardham J.M."/>
            <person name="McLeod M.P."/>
            <person name="Salzberg S.L."/>
            <person name="Peterson J.D."/>
            <person name="Khalak H.G."/>
            <person name="Richardson D.L."/>
            <person name="Howell J.K."/>
            <person name="Chidambaram M."/>
            <person name="Utterback T.R."/>
            <person name="McDonald L.A."/>
            <person name="Artiach P."/>
            <person name="Bowman C."/>
            <person name="Cotton M.D."/>
            <person name="Fujii C."/>
            <person name="Garland S.A."/>
            <person name="Hatch B."/>
            <person name="Horst K."/>
            <person name="Roberts K.M."/>
            <person name="Sandusky M."/>
            <person name="Weidman J.F."/>
            <person name="Smith H.O."/>
            <person name="Venter J.C."/>
        </authorList>
    </citation>
    <scope>NUCLEOTIDE SEQUENCE [LARGE SCALE GENOMIC DNA]</scope>
    <source>
        <strain>Nichols</strain>
    </source>
</reference>
<evidence type="ECO:0000250" key="1">
    <source>
        <dbReference type="UniProtKB" id="P54462"/>
    </source>
</evidence>
<evidence type="ECO:0000255" key="2">
    <source>
        <dbReference type="PROSITE-ProRule" id="PRU00780"/>
    </source>
</evidence>
<evidence type="ECO:0000255" key="3">
    <source>
        <dbReference type="PROSITE-ProRule" id="PRU01266"/>
    </source>
</evidence>
<evidence type="ECO:0000305" key="4"/>
<protein>
    <recommendedName>
        <fullName>Threonylcarbamoyladenosine tRNA methylthiotransferase MtaB</fullName>
        <ecNumber>2.8.4.5</ecNumber>
    </recommendedName>
    <alternativeName>
        <fullName>tRNA-t(6)A37 methylthiotransferase</fullName>
    </alternativeName>
</protein>
<organism>
    <name type="scientific">Treponema pallidum (strain Nichols)</name>
    <dbReference type="NCBI Taxonomy" id="243276"/>
    <lineage>
        <taxon>Bacteria</taxon>
        <taxon>Pseudomonadati</taxon>
        <taxon>Spirochaetota</taxon>
        <taxon>Spirochaetia</taxon>
        <taxon>Spirochaetales</taxon>
        <taxon>Treponemataceae</taxon>
        <taxon>Treponema</taxon>
    </lineage>
</organism>
<accession>O83293</accession>
<proteinExistence type="inferred from homology"/>
<gene>
    <name type="primary">mtaB</name>
    <name type="ordered locus">TP_0269</name>
</gene>
<name>MTAB_TREPA</name>